<sequence length="67" mass="7879">MSLFPVIVVFGLSFPPIFFELLLSLAIFWLVRRMLVPTGIYDFVWHPALFNTALYCCLFYLISRLFV</sequence>
<accession>B4TJU0</accession>
<keyword id="KW-1003">Cell membrane</keyword>
<keyword id="KW-0472">Membrane</keyword>
<keyword id="KW-0812">Transmembrane</keyword>
<keyword id="KW-1133">Transmembrane helix</keyword>
<dbReference type="EMBL" id="CP001120">
    <property type="protein sequence ID" value="ACF66881.1"/>
    <property type="molecule type" value="Genomic_DNA"/>
</dbReference>
<dbReference type="RefSeq" id="WP_000051840.1">
    <property type="nucleotide sequence ID" value="NC_011083.1"/>
</dbReference>
<dbReference type="SMR" id="B4TJU0"/>
<dbReference type="GeneID" id="45138179"/>
<dbReference type="KEGG" id="seh:SeHA_C3664"/>
<dbReference type="HOGENOM" id="CLU_188292_0_0_6"/>
<dbReference type="Proteomes" id="UP000001866">
    <property type="component" value="Chromosome"/>
</dbReference>
<dbReference type="GO" id="GO:0005886">
    <property type="term" value="C:plasma membrane"/>
    <property type="evidence" value="ECO:0007669"/>
    <property type="project" value="UniProtKB-SubCell"/>
</dbReference>
<dbReference type="HAMAP" id="MF_01546">
    <property type="entry name" value="AaeX"/>
    <property type="match status" value="1"/>
</dbReference>
<dbReference type="InterPro" id="IPR012451">
    <property type="entry name" value="DUF1656"/>
</dbReference>
<dbReference type="NCBIfam" id="NF008615">
    <property type="entry name" value="PRK11594.1"/>
    <property type="match status" value="1"/>
</dbReference>
<dbReference type="Pfam" id="PF07869">
    <property type="entry name" value="DUF1656"/>
    <property type="match status" value="1"/>
</dbReference>
<name>AAEX_SALHS</name>
<reference key="1">
    <citation type="journal article" date="2011" name="J. Bacteriol.">
        <title>Comparative genomics of 28 Salmonella enterica isolates: evidence for CRISPR-mediated adaptive sublineage evolution.</title>
        <authorList>
            <person name="Fricke W.F."/>
            <person name="Mammel M.K."/>
            <person name="McDermott P.F."/>
            <person name="Tartera C."/>
            <person name="White D.G."/>
            <person name="Leclerc J.E."/>
            <person name="Ravel J."/>
            <person name="Cebula T.A."/>
        </authorList>
    </citation>
    <scope>NUCLEOTIDE SEQUENCE [LARGE SCALE GENOMIC DNA]</scope>
    <source>
        <strain>SL476</strain>
    </source>
</reference>
<comment type="subcellular location">
    <subcellularLocation>
        <location evidence="1">Cell membrane</location>
        <topology evidence="1">Multi-pass membrane protein</topology>
    </subcellularLocation>
</comment>
<comment type="similarity">
    <text evidence="1">Belongs to the AaeX family.</text>
</comment>
<feature type="chain" id="PRO_1000146763" description="Protein AaeX">
    <location>
        <begin position="1"/>
        <end position="67"/>
    </location>
</feature>
<feature type="transmembrane region" description="Helical" evidence="1">
    <location>
        <begin position="3"/>
        <end position="23"/>
    </location>
</feature>
<feature type="transmembrane region" description="Helical" evidence="1">
    <location>
        <begin position="43"/>
        <end position="63"/>
    </location>
</feature>
<organism>
    <name type="scientific">Salmonella heidelberg (strain SL476)</name>
    <dbReference type="NCBI Taxonomy" id="454169"/>
    <lineage>
        <taxon>Bacteria</taxon>
        <taxon>Pseudomonadati</taxon>
        <taxon>Pseudomonadota</taxon>
        <taxon>Gammaproteobacteria</taxon>
        <taxon>Enterobacterales</taxon>
        <taxon>Enterobacteriaceae</taxon>
        <taxon>Salmonella</taxon>
    </lineage>
</organism>
<evidence type="ECO:0000255" key="1">
    <source>
        <dbReference type="HAMAP-Rule" id="MF_01546"/>
    </source>
</evidence>
<gene>
    <name evidence="1" type="primary">aaeX</name>
    <name type="ordered locus">SeHA_C3664</name>
</gene>
<protein>
    <recommendedName>
        <fullName evidence="1">Protein AaeX</fullName>
    </recommendedName>
</protein>
<proteinExistence type="inferred from homology"/>